<reference key="1">
    <citation type="journal article" date="2010" name="Appl. Environ. Microbiol.">
        <title>The genome sequence of Psychrobacter arcticus 273-4, a psychroactive Siberian permafrost bacterium, reveals mechanisms for adaptation to low-temperature growth.</title>
        <authorList>
            <person name="Ayala-del-Rio H.L."/>
            <person name="Chain P.S."/>
            <person name="Grzymski J.J."/>
            <person name="Ponder M.A."/>
            <person name="Ivanova N."/>
            <person name="Bergholz P.W."/>
            <person name="Di Bartolo G."/>
            <person name="Hauser L."/>
            <person name="Land M."/>
            <person name="Bakermans C."/>
            <person name="Rodrigues D."/>
            <person name="Klappenbach J."/>
            <person name="Zarka D."/>
            <person name="Larimer F."/>
            <person name="Richardson P."/>
            <person name="Murray A."/>
            <person name="Thomashow M."/>
            <person name="Tiedje J.M."/>
        </authorList>
    </citation>
    <scope>NUCLEOTIDE SEQUENCE [LARGE SCALE GENOMIC DNA]</scope>
    <source>
        <strain>DSM 17307 / VKM B-2377 / 273-4</strain>
    </source>
</reference>
<proteinExistence type="inferred from homology"/>
<gene>
    <name evidence="1" type="primary">atpA</name>
    <name type="ordered locus">Psyc_2026</name>
</gene>
<organism>
    <name type="scientific">Psychrobacter arcticus (strain DSM 17307 / VKM B-2377 / 273-4)</name>
    <dbReference type="NCBI Taxonomy" id="259536"/>
    <lineage>
        <taxon>Bacteria</taxon>
        <taxon>Pseudomonadati</taxon>
        <taxon>Pseudomonadota</taxon>
        <taxon>Gammaproteobacteria</taxon>
        <taxon>Moraxellales</taxon>
        <taxon>Moraxellaceae</taxon>
        <taxon>Psychrobacter</taxon>
    </lineage>
</organism>
<accession>Q4FQ35</accession>
<protein>
    <recommendedName>
        <fullName evidence="1">ATP synthase subunit alpha</fullName>
        <ecNumber evidence="1">7.1.2.2</ecNumber>
    </recommendedName>
    <alternativeName>
        <fullName evidence="1">ATP synthase F1 sector subunit alpha</fullName>
    </alternativeName>
    <alternativeName>
        <fullName evidence="1">F-ATPase subunit alpha</fullName>
    </alternativeName>
</protein>
<dbReference type="EC" id="7.1.2.2" evidence="1"/>
<dbReference type="EMBL" id="CP000082">
    <property type="protein sequence ID" value="AAZ19873.1"/>
    <property type="molecule type" value="Genomic_DNA"/>
</dbReference>
<dbReference type="RefSeq" id="WP_011281281.1">
    <property type="nucleotide sequence ID" value="NC_007204.1"/>
</dbReference>
<dbReference type="SMR" id="Q4FQ35"/>
<dbReference type="STRING" id="259536.Psyc_2026"/>
<dbReference type="KEGG" id="par:Psyc_2026"/>
<dbReference type="eggNOG" id="COG0056">
    <property type="taxonomic scope" value="Bacteria"/>
</dbReference>
<dbReference type="HOGENOM" id="CLU_010091_2_1_6"/>
<dbReference type="OrthoDB" id="9803053at2"/>
<dbReference type="Proteomes" id="UP000000546">
    <property type="component" value="Chromosome"/>
</dbReference>
<dbReference type="GO" id="GO:0005886">
    <property type="term" value="C:plasma membrane"/>
    <property type="evidence" value="ECO:0007669"/>
    <property type="project" value="UniProtKB-SubCell"/>
</dbReference>
<dbReference type="GO" id="GO:0045259">
    <property type="term" value="C:proton-transporting ATP synthase complex"/>
    <property type="evidence" value="ECO:0007669"/>
    <property type="project" value="UniProtKB-KW"/>
</dbReference>
<dbReference type="GO" id="GO:0043531">
    <property type="term" value="F:ADP binding"/>
    <property type="evidence" value="ECO:0007669"/>
    <property type="project" value="TreeGrafter"/>
</dbReference>
<dbReference type="GO" id="GO:0005524">
    <property type="term" value="F:ATP binding"/>
    <property type="evidence" value="ECO:0007669"/>
    <property type="project" value="UniProtKB-UniRule"/>
</dbReference>
<dbReference type="GO" id="GO:0046933">
    <property type="term" value="F:proton-transporting ATP synthase activity, rotational mechanism"/>
    <property type="evidence" value="ECO:0007669"/>
    <property type="project" value="UniProtKB-UniRule"/>
</dbReference>
<dbReference type="CDD" id="cd18113">
    <property type="entry name" value="ATP-synt_F1_alpha_C"/>
    <property type="match status" value="1"/>
</dbReference>
<dbReference type="CDD" id="cd18116">
    <property type="entry name" value="ATP-synt_F1_alpha_N"/>
    <property type="match status" value="1"/>
</dbReference>
<dbReference type="CDD" id="cd01132">
    <property type="entry name" value="F1-ATPase_alpha_CD"/>
    <property type="match status" value="1"/>
</dbReference>
<dbReference type="FunFam" id="1.20.150.20:FF:000001">
    <property type="entry name" value="ATP synthase subunit alpha"/>
    <property type="match status" value="1"/>
</dbReference>
<dbReference type="FunFam" id="2.40.30.20:FF:000001">
    <property type="entry name" value="ATP synthase subunit alpha"/>
    <property type="match status" value="1"/>
</dbReference>
<dbReference type="FunFam" id="3.40.50.300:FF:000002">
    <property type="entry name" value="ATP synthase subunit alpha"/>
    <property type="match status" value="1"/>
</dbReference>
<dbReference type="Gene3D" id="2.40.30.20">
    <property type="match status" value="1"/>
</dbReference>
<dbReference type="Gene3D" id="1.20.150.20">
    <property type="entry name" value="ATP synthase alpha/beta chain, C-terminal domain"/>
    <property type="match status" value="1"/>
</dbReference>
<dbReference type="Gene3D" id="3.40.50.300">
    <property type="entry name" value="P-loop containing nucleotide triphosphate hydrolases"/>
    <property type="match status" value="1"/>
</dbReference>
<dbReference type="HAMAP" id="MF_01346">
    <property type="entry name" value="ATP_synth_alpha_bact"/>
    <property type="match status" value="1"/>
</dbReference>
<dbReference type="InterPro" id="IPR023366">
    <property type="entry name" value="ATP_synth_asu-like_sf"/>
</dbReference>
<dbReference type="InterPro" id="IPR000793">
    <property type="entry name" value="ATP_synth_asu_C"/>
</dbReference>
<dbReference type="InterPro" id="IPR038376">
    <property type="entry name" value="ATP_synth_asu_C_sf"/>
</dbReference>
<dbReference type="InterPro" id="IPR033732">
    <property type="entry name" value="ATP_synth_F1_a_nt-bd_dom"/>
</dbReference>
<dbReference type="InterPro" id="IPR005294">
    <property type="entry name" value="ATP_synth_F1_asu"/>
</dbReference>
<dbReference type="InterPro" id="IPR020003">
    <property type="entry name" value="ATPase_a/bsu_AS"/>
</dbReference>
<dbReference type="InterPro" id="IPR004100">
    <property type="entry name" value="ATPase_F1/V1/A1_a/bsu_N"/>
</dbReference>
<dbReference type="InterPro" id="IPR036121">
    <property type="entry name" value="ATPase_F1/V1/A1_a/bsu_N_sf"/>
</dbReference>
<dbReference type="InterPro" id="IPR000194">
    <property type="entry name" value="ATPase_F1/V1/A1_a/bsu_nucl-bd"/>
</dbReference>
<dbReference type="InterPro" id="IPR027417">
    <property type="entry name" value="P-loop_NTPase"/>
</dbReference>
<dbReference type="NCBIfam" id="TIGR00962">
    <property type="entry name" value="atpA"/>
    <property type="match status" value="1"/>
</dbReference>
<dbReference type="NCBIfam" id="NF009884">
    <property type="entry name" value="PRK13343.1"/>
    <property type="match status" value="1"/>
</dbReference>
<dbReference type="PANTHER" id="PTHR48082">
    <property type="entry name" value="ATP SYNTHASE SUBUNIT ALPHA, MITOCHONDRIAL"/>
    <property type="match status" value="1"/>
</dbReference>
<dbReference type="PANTHER" id="PTHR48082:SF2">
    <property type="entry name" value="ATP SYNTHASE SUBUNIT ALPHA, MITOCHONDRIAL"/>
    <property type="match status" value="1"/>
</dbReference>
<dbReference type="Pfam" id="PF00006">
    <property type="entry name" value="ATP-synt_ab"/>
    <property type="match status" value="1"/>
</dbReference>
<dbReference type="Pfam" id="PF00306">
    <property type="entry name" value="ATP-synt_ab_C"/>
    <property type="match status" value="1"/>
</dbReference>
<dbReference type="Pfam" id="PF02874">
    <property type="entry name" value="ATP-synt_ab_N"/>
    <property type="match status" value="1"/>
</dbReference>
<dbReference type="PIRSF" id="PIRSF039088">
    <property type="entry name" value="F_ATPase_subunit_alpha"/>
    <property type="match status" value="1"/>
</dbReference>
<dbReference type="SUPFAM" id="SSF47917">
    <property type="entry name" value="C-terminal domain of alpha and beta subunits of F1 ATP synthase"/>
    <property type="match status" value="1"/>
</dbReference>
<dbReference type="SUPFAM" id="SSF50615">
    <property type="entry name" value="N-terminal domain of alpha and beta subunits of F1 ATP synthase"/>
    <property type="match status" value="1"/>
</dbReference>
<dbReference type="SUPFAM" id="SSF52540">
    <property type="entry name" value="P-loop containing nucleoside triphosphate hydrolases"/>
    <property type="match status" value="1"/>
</dbReference>
<dbReference type="PROSITE" id="PS00152">
    <property type="entry name" value="ATPASE_ALPHA_BETA"/>
    <property type="match status" value="1"/>
</dbReference>
<name>ATPA_PSYA2</name>
<feature type="chain" id="PRO_0000238334" description="ATP synthase subunit alpha">
    <location>
        <begin position="1"/>
        <end position="514"/>
    </location>
</feature>
<feature type="binding site" evidence="1">
    <location>
        <begin position="170"/>
        <end position="177"/>
    </location>
    <ligand>
        <name>ATP</name>
        <dbReference type="ChEBI" id="CHEBI:30616"/>
    </ligand>
</feature>
<feature type="site" description="Required for activity" evidence="1">
    <location>
        <position position="374"/>
    </location>
</feature>
<keyword id="KW-0066">ATP synthesis</keyword>
<keyword id="KW-0067">ATP-binding</keyword>
<keyword id="KW-0997">Cell inner membrane</keyword>
<keyword id="KW-1003">Cell membrane</keyword>
<keyword id="KW-0139">CF(1)</keyword>
<keyword id="KW-0375">Hydrogen ion transport</keyword>
<keyword id="KW-0406">Ion transport</keyword>
<keyword id="KW-0472">Membrane</keyword>
<keyword id="KW-0547">Nucleotide-binding</keyword>
<keyword id="KW-1185">Reference proteome</keyword>
<keyword id="KW-1278">Translocase</keyword>
<keyword id="KW-0813">Transport</keyword>
<comment type="function">
    <text evidence="1">Produces ATP from ADP in the presence of a proton gradient across the membrane. The alpha chain is a regulatory subunit.</text>
</comment>
<comment type="catalytic activity">
    <reaction evidence="1">
        <text>ATP + H2O + 4 H(+)(in) = ADP + phosphate + 5 H(+)(out)</text>
        <dbReference type="Rhea" id="RHEA:57720"/>
        <dbReference type="ChEBI" id="CHEBI:15377"/>
        <dbReference type="ChEBI" id="CHEBI:15378"/>
        <dbReference type="ChEBI" id="CHEBI:30616"/>
        <dbReference type="ChEBI" id="CHEBI:43474"/>
        <dbReference type="ChEBI" id="CHEBI:456216"/>
        <dbReference type="EC" id="7.1.2.2"/>
    </reaction>
</comment>
<comment type="subunit">
    <text evidence="1">F-type ATPases have 2 components, CF(1) - the catalytic core - and CF(0) - the membrane proton channel. CF(1) has five subunits: alpha(3), beta(3), gamma(1), delta(1), epsilon(1). CF(0) has three main subunits: a(1), b(2) and c(9-12). The alpha and beta chains form an alternating ring which encloses part of the gamma chain. CF(1) is attached to CF(0) by a central stalk formed by the gamma and epsilon chains, while a peripheral stalk is formed by the delta and b chains.</text>
</comment>
<comment type="subcellular location">
    <subcellularLocation>
        <location evidence="1">Cell inner membrane</location>
        <topology evidence="1">Peripheral membrane protein</topology>
    </subcellularLocation>
</comment>
<comment type="similarity">
    <text evidence="1">Belongs to the ATPase alpha/beta chains family.</text>
</comment>
<sequence length="514" mass="55947">MQQLNPAEISNLIKQRIQDLDAGATAKNEGTIVKVSDGIVQIHGLEDAMYGEMIEFEGEVYGMALNLERDSVGAVVLGDFLKLQEGQKAYCTGRILEVPVGPELLGRVVDALGNPIDGKGPINAKMTDKVEKIAPGVIDRQSVDQPVMTGYKSVDTMIPIGRGQRELIIGDRQTGKTAMAIDAIIAQKASGIKCVYVAIGQKRSTIANVVRKLEQTGALEYTTVVVASASEPAALQYIAPYSGCTMGEYFRDRGEDALIVFDDLSKQAVAYRQISLLLRRPPGREAYPGDVFYLHSRLLERASRVNAAYVEKFTNGEVVGKTGSLTALPIIETQAGDVSAFVPTNVISITDGQIFLESSLFNSGIRPAVNAGISVSRVGGAAQTKIIKKLSGGIRTALAQYRELAAFAQFASDLDDATREQLDHGERVTELMKQKQYQPMSISEQAAVIYASNEGFLADVPVEKIGSFEEAYLRYMHDEQADLMKEIDDTANYNDDIAGRLKLSLETFKQNHSY</sequence>
<evidence type="ECO:0000255" key="1">
    <source>
        <dbReference type="HAMAP-Rule" id="MF_01346"/>
    </source>
</evidence>